<organism>
    <name type="scientific">Perna viridis</name>
    <name type="common">Asian green mussel</name>
    <name type="synonym">Mytilus viridis</name>
    <dbReference type="NCBI Taxonomy" id="73031"/>
    <lineage>
        <taxon>Eukaryota</taxon>
        <taxon>Metazoa</taxon>
        <taxon>Spiralia</taxon>
        <taxon>Lophotrochozoa</taxon>
        <taxon>Mollusca</taxon>
        <taxon>Bivalvia</taxon>
        <taxon>Autobranchia</taxon>
        <taxon>Pteriomorphia</taxon>
        <taxon>Mytilida</taxon>
        <taxon>Mytiloidea</taxon>
        <taxon>Mytilidae</taxon>
        <taxon>Mytilinae</taxon>
        <taxon>Perna</taxon>
    </lineage>
</organism>
<gene>
    <name evidence="11" type="primary">fp-1</name>
</gene>
<evidence type="ECO:0000250" key="1"/>
<evidence type="ECO:0000250" key="2">
    <source>
        <dbReference type="UniProtKB" id="Q25460"/>
    </source>
</evidence>
<evidence type="ECO:0000255" key="3"/>
<evidence type="ECO:0000256" key="4">
    <source>
        <dbReference type="SAM" id="MobiDB-lite"/>
    </source>
</evidence>
<evidence type="ECO:0000269" key="5">
    <source>
    </source>
</evidence>
<evidence type="ECO:0000269" key="6">
    <source>
    </source>
</evidence>
<evidence type="ECO:0000303" key="7">
    <source>
    </source>
</evidence>
<evidence type="ECO:0000303" key="8">
    <source>
    </source>
</evidence>
<evidence type="ECO:0000305" key="9"/>
<evidence type="ECO:0000305" key="10">
    <source>
    </source>
</evidence>
<evidence type="ECO:0000312" key="11">
    <source>
        <dbReference type="EMBL" id="AAY46226.1"/>
    </source>
</evidence>
<dbReference type="EMBL" id="DQ000154">
    <property type="protein sequence ID" value="AAY46226.1"/>
    <property type="molecule type" value="mRNA"/>
</dbReference>
<dbReference type="GlyCosmos" id="A1X158">
    <property type="glycosylation" value="80 sites, No reported glycans"/>
</dbReference>
<dbReference type="iPTMnet" id="A1X158"/>
<dbReference type="GO" id="GO:0005576">
    <property type="term" value="C:extracellular region"/>
    <property type="evidence" value="ECO:0000250"/>
    <property type="project" value="UniProtKB"/>
</dbReference>
<dbReference type="InterPro" id="IPR008160">
    <property type="entry name" value="Collagen"/>
</dbReference>
<dbReference type="PANTHER" id="PTHR24637">
    <property type="entry name" value="COLLAGEN"/>
    <property type="match status" value="1"/>
</dbReference>
<dbReference type="PANTHER" id="PTHR24637:SF236">
    <property type="entry name" value="NEMATODE CUTICLE COLLAGEN N-TERMINAL DOMAIN-CONTAINING PROTEIN"/>
    <property type="match status" value="1"/>
</dbReference>
<dbReference type="Pfam" id="PF01391">
    <property type="entry name" value="Collagen"/>
    <property type="match status" value="1"/>
</dbReference>
<feature type="signal peptide" evidence="5 6">
    <location>
        <begin position="1"/>
        <end position="20"/>
    </location>
</feature>
<feature type="chain" id="PRO_0000394802" description="Foot protein 1 variant 1" evidence="6">
    <location>
        <begin position="21"/>
        <end position="561"/>
    </location>
</feature>
<feature type="repeat" description="A-1; approximate" evidence="6">
    <location>
        <begin position="41"/>
        <end position="50"/>
    </location>
</feature>
<feature type="repeat" description="A-2; approximate" evidence="6">
    <location>
        <begin position="51"/>
        <end position="60"/>
    </location>
</feature>
<feature type="repeat" description="B-1" evidence="6">
    <location>
        <begin position="61"/>
        <end position="70"/>
    </location>
</feature>
<feature type="repeat" description="A-3" evidence="6">
    <location>
        <begin position="71"/>
        <end position="80"/>
    </location>
</feature>
<feature type="repeat" description="B-2" evidence="6">
    <location>
        <begin position="81"/>
        <end position="90"/>
    </location>
</feature>
<feature type="repeat" description="A-4; approximate" evidence="6">
    <location>
        <begin position="91"/>
        <end position="100"/>
    </location>
</feature>
<feature type="repeat" description="B-3" evidence="6">
    <location>
        <begin position="101"/>
        <end position="110"/>
    </location>
</feature>
<feature type="repeat" description="A-5" evidence="6">
    <location>
        <begin position="111"/>
        <end position="120"/>
    </location>
</feature>
<feature type="repeat" description="B-4; approximate" evidence="6">
    <location>
        <begin position="121"/>
        <end position="130"/>
    </location>
</feature>
<feature type="repeat" description="B-5" evidence="6">
    <location>
        <begin position="131"/>
        <end position="140"/>
    </location>
</feature>
<feature type="repeat" description="B-6" evidence="6">
    <location>
        <begin position="141"/>
        <end position="150"/>
    </location>
</feature>
<feature type="repeat" description="B-7" evidence="6">
    <location>
        <begin position="151"/>
        <end position="160"/>
    </location>
</feature>
<feature type="repeat" description="B-8" evidence="6">
    <location>
        <begin position="161"/>
        <end position="170"/>
    </location>
</feature>
<feature type="repeat" description="B-9; approximate" evidence="6">
    <location>
        <begin position="171"/>
        <end position="180"/>
    </location>
</feature>
<feature type="repeat" description="B-10" evidence="6">
    <location>
        <begin position="181"/>
        <end position="190"/>
    </location>
</feature>
<feature type="repeat" description="B-11" evidence="6">
    <location>
        <begin position="191"/>
        <end position="200"/>
    </location>
</feature>
<feature type="repeat" description="A-6; approximate" evidence="6">
    <location>
        <begin position="201"/>
        <end position="210"/>
    </location>
</feature>
<feature type="repeat" description="B-12; approximate" evidence="6">
    <location>
        <begin position="211"/>
        <end position="220"/>
    </location>
</feature>
<feature type="repeat" description="B-13" evidence="6">
    <location>
        <begin position="221"/>
        <end position="230"/>
    </location>
</feature>
<feature type="repeat" description="B-14" evidence="6">
    <location>
        <begin position="231"/>
        <end position="240"/>
    </location>
</feature>
<feature type="repeat" description="B-15; approximate" evidence="6">
    <location>
        <begin position="241"/>
        <end position="250"/>
    </location>
</feature>
<feature type="repeat" description="B-16" evidence="6">
    <location>
        <begin position="251"/>
        <end position="260"/>
    </location>
</feature>
<feature type="repeat" description="A-7" evidence="6">
    <location>
        <begin position="261"/>
        <end position="270"/>
    </location>
</feature>
<feature type="repeat" description="B-17" evidence="6">
    <location>
        <begin position="271"/>
        <end position="280"/>
    </location>
</feature>
<feature type="repeat" description="A-8; approximate" evidence="6">
    <location>
        <begin position="281"/>
        <end position="290"/>
    </location>
</feature>
<feature type="repeat" description="B-18" evidence="6">
    <location>
        <begin position="291"/>
        <end position="300"/>
    </location>
</feature>
<feature type="repeat" description="A-9; approximate" evidence="6">
    <location>
        <begin position="301"/>
        <end position="310"/>
    </location>
</feature>
<feature type="repeat" description="B-19" evidence="6">
    <location>
        <begin position="311"/>
        <end position="320"/>
    </location>
</feature>
<feature type="repeat" description="B-20" evidence="6">
    <location>
        <begin position="321"/>
        <end position="330"/>
    </location>
</feature>
<feature type="repeat" description="B-21" evidence="6">
    <location>
        <begin position="331"/>
        <end position="340"/>
    </location>
</feature>
<feature type="repeat" description="B-22" evidence="6">
    <location>
        <begin position="341"/>
        <end position="350"/>
    </location>
</feature>
<feature type="repeat" description="A-10; approximate" evidence="6">
    <location>
        <begin position="351"/>
        <end position="360"/>
    </location>
</feature>
<feature type="repeat" description="A-11; approximate" evidence="6">
    <location>
        <begin position="361"/>
        <end position="370"/>
    </location>
</feature>
<feature type="repeat" description="B-23" evidence="6">
    <location>
        <begin position="371"/>
        <end position="380"/>
    </location>
</feature>
<feature type="repeat" description="A-12" evidence="6">
    <location>
        <begin position="381"/>
        <end position="390"/>
    </location>
</feature>
<feature type="repeat" description="B-24" evidence="6">
    <location>
        <begin position="391"/>
        <end position="400"/>
    </location>
</feature>
<feature type="repeat" description="A-13" evidence="6">
    <location>
        <begin position="401"/>
        <end position="410"/>
    </location>
</feature>
<feature type="repeat" description="B-25" evidence="6">
    <location>
        <begin position="411"/>
        <end position="420"/>
    </location>
</feature>
<feature type="repeat" description="B-26; approximate" evidence="6">
    <location>
        <begin position="421"/>
        <end position="430"/>
    </location>
</feature>
<feature type="repeat" description="B-27; approximate" evidence="6">
    <location>
        <begin position="431"/>
        <end position="440"/>
    </location>
</feature>
<feature type="domain" description="Collagen-like" evidence="3">
    <location>
        <begin position="459"/>
        <end position="510"/>
    </location>
</feature>
<feature type="region of interest" description="13 X 10 AA A-P-P-P-A-W-T-A-W-K" evidence="6">
    <location>
        <begin position="41"/>
        <end position="410"/>
    </location>
</feature>
<feature type="region of interest" description="27 X 10 AA A-T-P-K-P-W-T-A-W-K" evidence="6">
    <location>
        <begin position="61"/>
        <end position="440"/>
    </location>
</feature>
<feature type="region of interest" description="Disordered" evidence="4">
    <location>
        <begin position="452"/>
        <end position="507"/>
    </location>
</feature>
<feature type="compositionally biased region" description="Gly residues" evidence="4">
    <location>
        <begin position="453"/>
        <end position="462"/>
    </location>
</feature>
<feature type="compositionally biased region" description="Low complexity" evidence="4">
    <location>
        <begin position="466"/>
        <end position="496"/>
    </location>
</feature>
<feature type="modified residue" description="3',4'-dihydroxyphenylalanine" evidence="5 6">
    <location>
        <position position="22"/>
    </location>
</feature>
<feature type="modified residue" description="4-hydroxyproline" evidence="6">
    <location>
        <position position="33"/>
    </location>
</feature>
<feature type="modified residue" description="7'-hydroxytryptophan" evidence="6">
    <location>
        <position position="46"/>
    </location>
</feature>
<feature type="modified residue" description="7'-hydroxytryptophan" evidence="6">
    <location>
        <position position="49"/>
    </location>
</feature>
<feature type="modified residue" description="7'-hydroxytryptophan" evidence="6">
    <location>
        <position position="56"/>
    </location>
</feature>
<feature type="modified residue" description="7'-hydroxytryptophan" evidence="6">
    <location>
        <position position="59"/>
    </location>
</feature>
<feature type="modified residue" description="4-hydroxyproline" evidence="6">
    <location>
        <position position="65"/>
    </location>
</feature>
<feature type="modified residue" description="7'-hydroxytryptophan" evidence="6">
    <location>
        <position position="69"/>
    </location>
</feature>
<feature type="modified residue" description="4-hydroxyproline" evidence="5 6">
    <location>
        <position position="72"/>
    </location>
</feature>
<feature type="modified residue" description="4-hydroxyproline" evidence="5 6">
    <location>
        <position position="73"/>
    </location>
</feature>
<feature type="modified residue" description="4-hydroxyproline" evidence="5 10">
    <location>
        <position position="74"/>
    </location>
</feature>
<feature type="modified residue" description="7'-hydroxytryptophan" evidence="6">
    <location>
        <position position="76"/>
    </location>
</feature>
<feature type="modified residue" description="7'-hydroxytryptophan" evidence="6">
    <location>
        <position position="79"/>
    </location>
</feature>
<feature type="modified residue" description="4-hydroxyproline" evidence="6">
    <location>
        <position position="85"/>
    </location>
</feature>
<feature type="modified residue" description="7'-hydroxytryptophan" evidence="6">
    <location>
        <position position="89"/>
    </location>
</feature>
<feature type="modified residue" description="4-hydroxyproline" evidence="5 6">
    <location>
        <position position="92"/>
    </location>
</feature>
<feature type="modified residue" description="4-hydroxyproline" evidence="5 6">
    <location>
        <position position="93"/>
    </location>
</feature>
<feature type="modified residue" description="4-hydroxyproline" evidence="5 10">
    <location>
        <position position="94"/>
    </location>
</feature>
<feature type="modified residue" description="7'-hydroxytryptophan" evidence="6">
    <location>
        <position position="96"/>
    </location>
</feature>
<feature type="modified residue" description="7'-hydroxytryptophan" evidence="6">
    <location>
        <position position="99"/>
    </location>
</feature>
<feature type="modified residue" description="4-hydroxyproline" evidence="6">
    <location>
        <position position="105"/>
    </location>
</feature>
<feature type="modified residue" description="7'-hydroxytryptophan" evidence="6">
    <location>
        <position position="109"/>
    </location>
</feature>
<feature type="modified residue" description="4-hydroxyproline" evidence="5 6">
    <location>
        <position position="112"/>
    </location>
</feature>
<feature type="modified residue" description="4-hydroxyproline" evidence="5 6">
    <location>
        <position position="113"/>
    </location>
</feature>
<feature type="modified residue" description="4-hydroxyproline" evidence="5 10">
    <location>
        <position position="114"/>
    </location>
</feature>
<feature type="modified residue" description="7'-hydroxytryptophan" evidence="6">
    <location>
        <position position="116"/>
    </location>
</feature>
<feature type="modified residue" description="7'-hydroxytryptophan" evidence="6">
    <location>
        <position position="119"/>
    </location>
</feature>
<feature type="modified residue" description="4-hydroxyproline" evidence="6">
    <location>
        <position position="125"/>
    </location>
</feature>
<feature type="modified residue" description="7'-hydroxytryptophan" evidence="6">
    <location>
        <position position="129"/>
    </location>
</feature>
<feature type="modified residue" description="4-hydroxyproline" evidence="6">
    <location>
        <position position="135"/>
    </location>
</feature>
<feature type="modified residue" description="7'-hydroxytryptophan" evidence="6">
    <location>
        <position position="139"/>
    </location>
</feature>
<feature type="modified residue" description="4-hydroxyproline" evidence="6">
    <location>
        <position position="145"/>
    </location>
</feature>
<feature type="modified residue" description="7'-hydroxytryptophan" evidence="6">
    <location>
        <position position="149"/>
    </location>
</feature>
<feature type="modified residue" description="4-hydroxyproline" evidence="6">
    <location>
        <position position="155"/>
    </location>
</feature>
<feature type="modified residue" description="7'-hydroxytryptophan" evidence="6">
    <location>
        <position position="159"/>
    </location>
</feature>
<feature type="modified residue" description="4-hydroxyproline" evidence="6">
    <location>
        <position position="165"/>
    </location>
</feature>
<feature type="modified residue" description="7'-hydroxytryptophan" evidence="6">
    <location>
        <position position="169"/>
    </location>
</feature>
<feature type="modified residue" description="4-hydroxyproline" evidence="6">
    <location>
        <position position="175"/>
    </location>
</feature>
<feature type="modified residue" description="7'-hydroxytryptophan" evidence="6">
    <location>
        <position position="179"/>
    </location>
</feature>
<feature type="modified residue" description="4-hydroxyproline" evidence="6">
    <location>
        <position position="185"/>
    </location>
</feature>
<feature type="modified residue" description="7'-hydroxytryptophan" evidence="6">
    <location>
        <position position="189"/>
    </location>
</feature>
<feature type="modified residue" description="4-hydroxyproline" evidence="6">
    <location>
        <position position="195"/>
    </location>
</feature>
<feature type="modified residue" description="7'-hydroxytryptophan" evidence="6">
    <location>
        <position position="199"/>
    </location>
</feature>
<feature type="modified residue" description="4-hydroxyproline" evidence="5 6">
    <location>
        <position position="202"/>
    </location>
</feature>
<feature type="modified residue" description="4-hydroxyproline" evidence="5 6">
    <location>
        <position position="203"/>
    </location>
</feature>
<feature type="modified residue" description="4-hydroxyproline" evidence="5 10">
    <location>
        <position position="204"/>
    </location>
</feature>
<feature type="modified residue" description="7'-hydroxytryptophan" evidence="6">
    <location>
        <position position="206"/>
    </location>
</feature>
<feature type="modified residue" description="7'-hydroxytryptophan" evidence="6">
    <location>
        <position position="209"/>
    </location>
</feature>
<feature type="modified residue" description="4-hydroxyproline" evidence="6">
    <location>
        <position position="215"/>
    </location>
</feature>
<feature type="modified residue" description="7'-hydroxytryptophan" evidence="6">
    <location>
        <position position="219"/>
    </location>
</feature>
<feature type="modified residue" description="4-hydroxyproline" evidence="6">
    <location>
        <position position="225"/>
    </location>
</feature>
<feature type="modified residue" description="7'-hydroxytryptophan" evidence="6">
    <location>
        <position position="229"/>
    </location>
</feature>
<feature type="modified residue" description="4-hydroxyproline" evidence="6">
    <location>
        <position position="235"/>
    </location>
</feature>
<feature type="modified residue" description="7'-hydroxytryptophan" evidence="6">
    <location>
        <position position="239"/>
    </location>
</feature>
<feature type="modified residue" description="4-hydroxyproline" evidence="6">
    <location>
        <position position="245"/>
    </location>
</feature>
<feature type="modified residue" description="7'-hydroxytryptophan" evidence="6">
    <location>
        <position position="249"/>
    </location>
</feature>
<feature type="modified residue" description="4-hydroxyproline" evidence="6">
    <location>
        <position position="255"/>
    </location>
</feature>
<feature type="modified residue" description="7'-hydroxytryptophan" evidence="6">
    <location>
        <position position="259"/>
    </location>
</feature>
<feature type="modified residue" description="4-hydroxyproline" evidence="5 6">
    <location>
        <position position="262"/>
    </location>
</feature>
<feature type="modified residue" description="4-hydroxyproline" evidence="5 6">
    <location>
        <position position="263"/>
    </location>
</feature>
<feature type="modified residue" description="4-hydroxyproline" evidence="5 10">
    <location>
        <position position="264"/>
    </location>
</feature>
<feature type="modified residue" description="7'-hydroxytryptophan" evidence="6">
    <location>
        <position position="266"/>
    </location>
</feature>
<feature type="modified residue" description="7'-hydroxytryptophan" evidence="6">
    <location>
        <position position="269"/>
    </location>
</feature>
<feature type="modified residue" description="4-hydroxyproline" evidence="6">
    <location>
        <position position="275"/>
    </location>
</feature>
<feature type="modified residue" description="7'-hydroxytryptophan" evidence="6">
    <location>
        <position position="279"/>
    </location>
</feature>
<feature type="modified residue" description="4-hydroxyproline" evidence="5 6">
    <location>
        <position position="282"/>
    </location>
</feature>
<feature type="modified residue" description="4-hydroxyproline" evidence="5 6">
    <location>
        <position position="283"/>
    </location>
</feature>
<feature type="modified residue" description="4-hydroxyproline" evidence="5 10">
    <location>
        <position position="284"/>
    </location>
</feature>
<feature type="modified residue" description="7'-hydroxytryptophan" evidence="6">
    <location>
        <position position="286"/>
    </location>
</feature>
<feature type="modified residue" description="7'-hydroxytryptophan" evidence="6">
    <location>
        <position position="289"/>
    </location>
</feature>
<feature type="modified residue" description="4-hydroxyproline" evidence="6">
    <location>
        <position position="295"/>
    </location>
</feature>
<feature type="modified residue" description="7'-hydroxytryptophan" evidence="6">
    <location>
        <position position="299"/>
    </location>
</feature>
<feature type="modified residue" description="4-hydroxyproline" evidence="5 6">
    <location>
        <position position="302"/>
    </location>
</feature>
<feature type="modified residue" description="4-hydroxyproline" evidence="5 6">
    <location>
        <position position="303"/>
    </location>
</feature>
<feature type="modified residue" description="4-hydroxyproline" evidence="5 10">
    <location>
        <position position="304"/>
    </location>
</feature>
<feature type="modified residue" description="7'-hydroxytryptophan" evidence="6">
    <location>
        <position position="306"/>
    </location>
</feature>
<feature type="modified residue" description="7'-hydroxytryptophan" evidence="6">
    <location>
        <position position="309"/>
    </location>
</feature>
<feature type="modified residue" description="4-hydroxyproline" evidence="6">
    <location>
        <position position="315"/>
    </location>
</feature>
<feature type="modified residue" description="7'-hydroxytryptophan" evidence="6">
    <location>
        <position position="319"/>
    </location>
</feature>
<feature type="modified residue" description="4-hydroxyproline" evidence="6">
    <location>
        <position position="325"/>
    </location>
</feature>
<feature type="modified residue" description="7'-hydroxytryptophan" evidence="6">
    <location>
        <position position="329"/>
    </location>
</feature>
<feature type="modified residue" description="4-hydroxyproline" evidence="6">
    <location>
        <position position="335"/>
    </location>
</feature>
<feature type="modified residue" description="7'-hydroxytryptophan" evidence="6">
    <location>
        <position position="339"/>
    </location>
</feature>
<feature type="modified residue" description="4-hydroxyproline" evidence="6">
    <location>
        <position position="345"/>
    </location>
</feature>
<feature type="modified residue" description="7'-hydroxytryptophan" evidence="6">
    <location>
        <position position="349"/>
    </location>
</feature>
<feature type="modified residue" description="4-hydroxyproline" evidence="5 6">
    <location>
        <position position="352"/>
    </location>
</feature>
<feature type="modified residue" description="4-hydroxyproline" evidence="5 6">
    <location>
        <position position="353"/>
    </location>
</feature>
<feature type="modified residue" description="4-hydroxyproline" evidence="5 10">
    <location>
        <position position="354"/>
    </location>
</feature>
<feature type="modified residue" description="7'-hydroxytryptophan" evidence="6">
    <location>
        <position position="356"/>
    </location>
</feature>
<feature type="modified residue" description="7'-hydroxytryptophan" evidence="6">
    <location>
        <position position="359"/>
    </location>
</feature>
<feature type="modified residue" description="7'-hydroxytryptophan" evidence="6">
    <location>
        <position position="366"/>
    </location>
</feature>
<feature type="modified residue" description="7'-hydroxytryptophan" evidence="6">
    <location>
        <position position="369"/>
    </location>
</feature>
<feature type="modified residue" description="4-hydroxyproline" evidence="6">
    <location>
        <position position="375"/>
    </location>
</feature>
<feature type="modified residue" description="7'-hydroxytryptophan" evidence="6">
    <location>
        <position position="379"/>
    </location>
</feature>
<feature type="modified residue" description="4-hydroxyproline" evidence="5 6">
    <location>
        <position position="382"/>
    </location>
</feature>
<feature type="modified residue" description="4-hydroxyproline" evidence="5 6">
    <location>
        <position position="383"/>
    </location>
</feature>
<feature type="modified residue" description="4-hydroxyproline" evidence="5 10">
    <location>
        <position position="384"/>
    </location>
</feature>
<feature type="modified residue" description="7'-hydroxytryptophan" evidence="6">
    <location>
        <position position="386"/>
    </location>
</feature>
<feature type="modified residue" description="7'-hydroxytryptophan" evidence="6">
    <location>
        <position position="389"/>
    </location>
</feature>
<feature type="modified residue" description="4-hydroxyproline" evidence="6">
    <location>
        <position position="395"/>
    </location>
</feature>
<feature type="modified residue" description="7'-hydroxytryptophan" evidence="6">
    <location>
        <position position="399"/>
    </location>
</feature>
<feature type="modified residue" description="4-hydroxyproline" evidence="5 6">
    <location>
        <position position="402"/>
    </location>
</feature>
<feature type="modified residue" description="4-hydroxyproline" evidence="5 6">
    <location>
        <position position="403"/>
    </location>
</feature>
<feature type="modified residue" description="4-hydroxyproline" evidence="5 10">
    <location>
        <position position="404"/>
    </location>
</feature>
<feature type="modified residue" description="7'-hydroxytryptophan" evidence="6">
    <location>
        <position position="406"/>
    </location>
</feature>
<feature type="modified residue" description="7'-hydroxytryptophan" evidence="6">
    <location>
        <position position="409"/>
    </location>
</feature>
<feature type="modified residue" description="4-hydroxyproline" evidence="6">
    <location>
        <position position="415"/>
    </location>
</feature>
<feature type="modified residue" description="7'-hydroxytryptophan" evidence="6">
    <location>
        <position position="419"/>
    </location>
</feature>
<feature type="modified residue" description="4-hydroxyproline" evidence="6">
    <location>
        <position position="425"/>
    </location>
</feature>
<feature type="modified residue" description="7'-hydroxytryptophan" evidence="6">
    <location>
        <position position="429"/>
    </location>
</feature>
<feature type="modified residue" description="4-hydroxyproline" evidence="6">
    <location>
        <position position="435"/>
    </location>
</feature>
<feature type="modified residue" description="7'-hydroxytryptophan" evidence="6">
    <location>
        <position position="439"/>
    </location>
</feature>
<feature type="modified residue" description="4-hydroxyproline" evidence="6">
    <location>
        <position position="497"/>
    </location>
</feature>
<feature type="modified residue" description="4-hydroxyproline" evidence="6">
    <location>
        <position position="500"/>
    </location>
</feature>
<feature type="modified residue" description="4-hydroxyproline" evidence="6">
    <location>
        <position position="506"/>
    </location>
</feature>
<feature type="glycosylation site" description="C-linked (Man) hydroxytryptophan" evidence="6">
    <location>
        <position position="46"/>
    </location>
</feature>
<feature type="glycosylation site" description="C-linked (Man) hydroxytryptophan" evidence="6">
    <location>
        <position position="49"/>
    </location>
</feature>
<feature type="glycosylation site" description="C-linked (Man) hydroxytryptophan" evidence="6">
    <location>
        <position position="56"/>
    </location>
</feature>
<feature type="glycosylation site" description="C-linked (Man) hydroxytryptophan" evidence="6">
    <location>
        <position position="59"/>
    </location>
</feature>
<feature type="glycosylation site" description="C-linked (Man) tryptophan" evidence="6">
    <location>
        <position position="66"/>
    </location>
</feature>
<feature type="glycosylation site" description="C-linked (Man) hydroxytryptophan" evidence="6">
    <location>
        <position position="69"/>
    </location>
</feature>
<feature type="glycosylation site" description="C-linked (Man) hydroxytryptophan" evidence="6">
    <location>
        <position position="76"/>
    </location>
</feature>
<feature type="glycosylation site" description="C-linked (Man) hydroxytryptophan" evidence="6">
    <location>
        <position position="79"/>
    </location>
</feature>
<feature type="glycosylation site" description="C-linked (Man) tryptophan" evidence="6">
    <location>
        <position position="86"/>
    </location>
</feature>
<feature type="glycosylation site" description="C-linked (Man) hydroxytryptophan" evidence="6">
    <location>
        <position position="89"/>
    </location>
</feature>
<feature type="glycosylation site" description="C-linked (Man) hydroxytryptophan" evidence="6">
    <location>
        <position position="96"/>
    </location>
</feature>
<feature type="glycosylation site" description="C-linked (Man) hydroxytryptophan" evidence="6">
    <location>
        <position position="99"/>
    </location>
</feature>
<feature type="glycosylation site" description="C-linked (Man) tryptophan" evidence="6">
    <location>
        <position position="106"/>
    </location>
</feature>
<feature type="glycosylation site" description="C-linked (Man) hydroxytryptophan" evidence="6">
    <location>
        <position position="109"/>
    </location>
</feature>
<feature type="glycosylation site" description="C-linked (Man) hydroxytryptophan" evidence="6">
    <location>
        <position position="116"/>
    </location>
</feature>
<feature type="glycosylation site" description="C-linked (Man) hydroxytryptophan" evidence="6">
    <location>
        <position position="119"/>
    </location>
</feature>
<feature type="glycosylation site" description="C-linked (Man) tryptophan" evidence="6">
    <location>
        <position position="126"/>
    </location>
</feature>
<feature type="glycosylation site" description="C-linked (Man) hydroxytryptophan" evidence="6">
    <location>
        <position position="129"/>
    </location>
</feature>
<feature type="glycosylation site" description="C-linked (Man) tryptophan" evidence="6">
    <location>
        <position position="136"/>
    </location>
</feature>
<feature type="glycosylation site" description="C-linked (Man) hydroxytryptophan" evidence="6">
    <location>
        <position position="139"/>
    </location>
</feature>
<feature type="glycosylation site" description="C-linked (Man) tryptophan" evidence="6">
    <location>
        <position position="146"/>
    </location>
</feature>
<feature type="glycosylation site" description="C-linked (Man) hydroxytryptophan" evidence="6">
    <location>
        <position position="149"/>
    </location>
</feature>
<feature type="glycosylation site" description="C-linked (Man) tryptophan" evidence="6">
    <location>
        <position position="156"/>
    </location>
</feature>
<feature type="glycosylation site" description="C-linked (Man) hydroxytryptophan" evidence="6">
    <location>
        <position position="159"/>
    </location>
</feature>
<feature type="glycosylation site" description="C-linked (Man) tryptophan" evidence="6">
    <location>
        <position position="166"/>
    </location>
</feature>
<feature type="glycosylation site" description="C-linked (Man) hydroxytryptophan" evidence="6">
    <location>
        <position position="169"/>
    </location>
</feature>
<feature type="glycosylation site" description="C-linked (Man) tryptophan" evidence="6">
    <location>
        <position position="176"/>
    </location>
</feature>
<feature type="glycosylation site" description="C-linked (Man) hydroxytryptophan" evidence="6">
    <location>
        <position position="179"/>
    </location>
</feature>
<feature type="glycosylation site" description="C-linked (Man) tryptophan" evidence="6">
    <location>
        <position position="186"/>
    </location>
</feature>
<feature type="glycosylation site" description="C-linked (Man) hydroxytryptophan" evidence="6">
    <location>
        <position position="189"/>
    </location>
</feature>
<feature type="glycosylation site" description="C-linked (Man) tryptophan" evidence="6">
    <location>
        <position position="196"/>
    </location>
</feature>
<feature type="glycosylation site" description="C-linked (Man) hydroxytryptophan" evidence="6">
    <location>
        <position position="199"/>
    </location>
</feature>
<feature type="glycosylation site" description="C-linked (Man) hydroxytryptophan" evidence="6">
    <location>
        <position position="206"/>
    </location>
</feature>
<feature type="glycosylation site" description="C-linked (Man) hydroxytryptophan" evidence="6">
    <location>
        <position position="209"/>
    </location>
</feature>
<feature type="glycosylation site" description="C-linked (Man) tryptophan" evidence="6">
    <location>
        <position position="216"/>
    </location>
</feature>
<feature type="glycosylation site" description="C-linked (Man) hydroxytryptophan" evidence="6">
    <location>
        <position position="219"/>
    </location>
</feature>
<feature type="glycosylation site" description="C-linked (Man) tryptophan" evidence="6">
    <location>
        <position position="226"/>
    </location>
</feature>
<feature type="glycosylation site" description="C-linked (Man) hydroxytryptophan" evidence="6">
    <location>
        <position position="229"/>
    </location>
</feature>
<feature type="glycosylation site" description="C-linked (Man) tryptophan" evidence="6">
    <location>
        <position position="236"/>
    </location>
</feature>
<feature type="glycosylation site" description="C-linked (Man) hydroxytryptophan" evidence="6">
    <location>
        <position position="239"/>
    </location>
</feature>
<feature type="glycosylation site" description="C-linked (Man) tryptophan" evidence="6">
    <location>
        <position position="246"/>
    </location>
</feature>
<feature type="glycosylation site" description="C-linked (Man) hydroxytryptophan" evidence="6">
    <location>
        <position position="249"/>
    </location>
</feature>
<feature type="glycosylation site" description="C-linked (Man) tryptophan" evidence="6">
    <location>
        <position position="256"/>
    </location>
</feature>
<feature type="glycosylation site" description="C-linked (Man) hydroxytryptophan" evidence="6">
    <location>
        <position position="259"/>
    </location>
</feature>
<feature type="glycosylation site" description="C-linked (Man) hydroxytryptophan" evidence="6">
    <location>
        <position position="266"/>
    </location>
</feature>
<feature type="glycosylation site" description="C-linked (Man) hydroxytryptophan" evidence="6">
    <location>
        <position position="269"/>
    </location>
</feature>
<feature type="glycosylation site" description="C-linked (Man) tryptophan" evidence="6">
    <location>
        <position position="276"/>
    </location>
</feature>
<feature type="glycosylation site" description="C-linked (Man) hydroxytryptophan" evidence="6">
    <location>
        <position position="279"/>
    </location>
</feature>
<feature type="glycosylation site" description="C-linked (Man) hydroxytryptophan" evidence="6">
    <location>
        <position position="286"/>
    </location>
</feature>
<feature type="glycosylation site" description="C-linked (Man) hydroxytryptophan" evidence="6">
    <location>
        <position position="289"/>
    </location>
</feature>
<feature type="glycosylation site" description="C-linked (Man) tryptophan" evidence="6">
    <location>
        <position position="296"/>
    </location>
</feature>
<feature type="glycosylation site" description="C-linked (Man) hydroxytryptophan" evidence="6">
    <location>
        <position position="299"/>
    </location>
</feature>
<feature type="glycosylation site" description="C-linked (Man) hydroxytryptophan" evidence="6">
    <location>
        <position position="306"/>
    </location>
</feature>
<feature type="glycosylation site" description="C-linked (Man) hydroxytryptophan" evidence="6">
    <location>
        <position position="309"/>
    </location>
</feature>
<feature type="glycosylation site" description="C-linked (Man) tryptophan" evidence="6">
    <location>
        <position position="316"/>
    </location>
</feature>
<feature type="glycosylation site" description="C-linked (Man) hydroxytryptophan" evidence="6">
    <location>
        <position position="319"/>
    </location>
</feature>
<feature type="glycosylation site" description="C-linked (Man) tryptophan" evidence="6">
    <location>
        <position position="326"/>
    </location>
</feature>
<feature type="glycosylation site" description="C-linked (Man) hydroxytryptophan" evidence="6">
    <location>
        <position position="329"/>
    </location>
</feature>
<feature type="glycosylation site" description="C-linked (Man) tryptophan" evidence="6">
    <location>
        <position position="336"/>
    </location>
</feature>
<feature type="glycosylation site" description="C-linked (Man) hydroxytryptophan" evidence="6">
    <location>
        <position position="339"/>
    </location>
</feature>
<feature type="glycosylation site" description="C-linked (Man) tryptophan" evidence="6">
    <location>
        <position position="346"/>
    </location>
</feature>
<feature type="glycosylation site" description="C-linked (Man) hydroxytryptophan" evidence="6">
    <location>
        <position position="349"/>
    </location>
</feature>
<feature type="glycosylation site" description="C-linked (Man) hydroxytryptophan" evidence="6">
    <location>
        <position position="356"/>
    </location>
</feature>
<feature type="glycosylation site" description="C-linked (Man) hydroxytryptophan" evidence="6">
    <location>
        <position position="359"/>
    </location>
</feature>
<feature type="glycosylation site" description="C-linked (Man) hydroxytryptophan" evidence="6">
    <location>
        <position position="366"/>
    </location>
</feature>
<feature type="glycosylation site" description="C-linked (Man) hydroxytryptophan" evidence="6">
    <location>
        <position position="369"/>
    </location>
</feature>
<feature type="glycosylation site" description="C-linked (Man) tryptophan" evidence="6">
    <location>
        <position position="376"/>
    </location>
</feature>
<feature type="glycosylation site" description="C-linked (Man) hydroxytryptophan" evidence="6">
    <location>
        <position position="379"/>
    </location>
</feature>
<feature type="glycosylation site" description="C-linked (Man) hydroxytryptophan" evidence="6">
    <location>
        <position position="386"/>
    </location>
</feature>
<feature type="glycosylation site" description="C-linked (Man) hydroxytryptophan" evidence="6">
    <location>
        <position position="389"/>
    </location>
</feature>
<feature type="glycosylation site" description="C-linked (Man) tryptophan" evidence="6">
    <location>
        <position position="396"/>
    </location>
</feature>
<feature type="glycosylation site" description="C-linked (Man) hydroxytryptophan" evidence="6">
    <location>
        <position position="399"/>
    </location>
</feature>
<feature type="glycosylation site" description="C-linked (Man) hydroxytryptophan" evidence="6">
    <location>
        <position position="406"/>
    </location>
</feature>
<feature type="glycosylation site" description="C-linked (Man) hydroxytryptophan" evidence="6">
    <location>
        <position position="409"/>
    </location>
</feature>
<feature type="glycosylation site" description="C-linked (Man) tryptophan" evidence="6">
    <location>
        <position position="416"/>
    </location>
</feature>
<feature type="glycosylation site" description="C-linked (Man) hydroxytryptophan" evidence="6">
    <location>
        <position position="419"/>
    </location>
</feature>
<feature type="glycosylation site" description="C-linked (Man) tryptophan" evidence="6">
    <location>
        <position position="426"/>
    </location>
</feature>
<feature type="glycosylation site" description="C-linked (Man) hydroxytryptophan" evidence="6">
    <location>
        <position position="429"/>
    </location>
</feature>
<feature type="glycosylation site" description="C-linked (Man) tryptophan" evidence="6">
    <location>
        <position position="436"/>
    </location>
</feature>
<feature type="glycosylation site" description="C-linked (Man) hydroxytryptophan" evidence="6">
    <location>
        <position position="439"/>
    </location>
</feature>
<sequence>MARNMNILTLFAVLIGSASAVYHPPSWTAWIAPKPWTAWKVHPPAWTAWKAHPPAWTAWKATPKPWTAWKAPPPAWTAWKATPKPWTAWKAPPPTWTAWKATPKPWTAWKAPPPAWTAWKATLKPWTAWKATPKPWTAWKATPKPWTAWKATPKPWTAWKATPKPWTAWKATPKPWTVWKATPKPWTAWKATPKPWTAWKAPPPAWSAWKATPKPWTVWKATPKPWTAWKATPKPWTAWKATPKPWTVWKATPKPWTAWKAPPPAWTAWKATPKPWTAWKAPPPTWTAWKATPKPWTAWKAPPPAWSAWKATPKPWTAWKATPKPWTAWKATPKPWTAWKATPKPWTAWKVPPPAWTAWKAHPPAWTAWKATPKPWTAWKAPPPAWTAWKATPKPWTAWKAPPPAWTAWKATPKPWTAWKATPKPWTVWKATPKPWTAWRATPPPTWTAWHGHGYGGYGKPGKPGKPGSKGPRGPAGPPGATGKTGRTGATGKRGPPGYPGKPGVPGRNGYVHIVFDGYGKWEIGKIERKNIREAVAKAWTAWNAGHGHGWTAWTAPPAYG</sequence>
<comment type="function">
    <text evidence="1">Provides adhesiveness to the mussel's foot. Mussels produce one of the strongest water insoluble glues. The mussel's adhesive is a bundle of threads, called a byssus, formed by a fibrous collagenous core coated with adhesive proteins (By similarity).</text>
</comment>
<comment type="subcellular location">
    <subcellularLocation>
        <location evidence="2">Secreted</location>
    </subcellularLocation>
</comment>
<comment type="tissue specificity">
    <text evidence="5 6">Produced by the byssal gland.</text>
</comment>
<comment type="domain">
    <text evidence="6">Almost exclusively composed of repeats of the decapeptides APPPAWTAWK and ATPKPWTAWK.</text>
</comment>
<comment type="miscellaneous">
    <text evidence="6 9">The identity of the hexosyl group at the C-2 position in the modified tryptophan residues has not been confirmed, but UV absorbance data suggests that it is mannose.</text>
</comment>
<comment type="miscellaneous">
    <text evidence="5">On the 2D-gel the molecular weight of this protein is: 89 kDa.</text>
</comment>
<keyword id="KW-0903">Direct protein sequencing</keyword>
<keyword id="KW-0325">Glycoprotein</keyword>
<keyword id="KW-0379">Hydroxylation</keyword>
<keyword id="KW-0677">Repeat</keyword>
<keyword id="KW-0964">Secreted</keyword>
<keyword id="KW-0732">Signal</keyword>
<name>FP1V1_PERVI</name>
<accession>A1X158</accession>
<protein>
    <recommendedName>
        <fullName evidence="7 8 11">Foot protein 1 variant 1</fullName>
    </recommendedName>
</protein>
<proteinExistence type="evidence at protein level"/>
<reference evidence="9 11" key="1">
    <citation type="journal article" date="2009" name="J. Biol. Chem.">
        <title>Glycosylated hydroxytryptophan in a mussel adhesive protein from Perna viridis.</title>
        <authorList>
            <person name="Zhao H."/>
            <person name="Sagert J."/>
            <person name="Hwang D.S."/>
            <person name="Waite J.H."/>
        </authorList>
    </citation>
    <scope>NUCLEOTIDE SEQUENCE [MRNA]</scope>
    <scope>PROTEIN SEQUENCE OF 21-34</scope>
    <scope>PROTEIN SEQUENCE OF REPEAT A</scope>
    <scope>PROTEIN SEQUENCE OF REPEAT B</scope>
    <scope>TISSUE SPECIFICITY</scope>
    <scope>HYDROXYLATION AT TYR-22; PRO-33; TRP-46; TRP-49; TRP-56; TRP-59; PRO-65; TRP-69; PRO-72; PRO-73; PRO-74; TRP-76; TRP-79; PRO-85; TRP-89; PRO-92; PRO-93; PRO-94; TRP-96; TRP-99; PRO-105; TRP-109; PRO-112; PRO-113; PRO-114; TRP-116; TRP-119; PRO-125; TRP-129; PRO-135; TRP-139; PRO-145; TRP-149; PRO-155; TRP-159; PRO-165; TRP-169; PRO-175; TRP-179; PRO-185; TRP-189; PRO-195; TRP-199; PRO-202; PRO-203; PRO-204; TRP-206; TRP-209; PRO-215; TRP-219; PRO-225; TRP-229; PRO-235; TRP-239; PRO-245; TRP-249; PRO-255; TRP-259; PRO-262; PRO-263; PRO-264; TRP-266; TRP-269; PRO-275; TRP-279; PRO-282; PRO-283; PRO-284; TRP-286; TRP-289; PRO-295; TRP-299; PRO-302; PRO-303; PRO-304; TRP-306; TRP-309; PRO-315; TRP-319; PRO-325; TRP-329; PRO-335; TRP-339; PRO-345; TRP-349; PRO-352; PRO-353; PRO-354; TRP-356; TRP-359; TRP-366; TRP-369; PRO-375; TRP-379; PRO-382; PRO-383; PRO-384; TRP-386; TRP-389; PRO-395; TRP-399; PRO-402; PRO-403; PRO-404; TRP-406; TRP-409; PRO-415; TRP-419; PRO-425; TRP-429; PRO-435; TRP-439; PRO-497; PRO-500 AND PRO-506</scope>
    <scope>GLYCOSYLATION AT TRP-46; TRP-49; TRP-56; TRP-59; TRP-66; TRP-69; TRP-76; TRP-79; TRP-86; TRP-89; TRP-96; TRP-99; TRP-106; TRP-109; TRP-116; TRP-119; TRP-126; TRP-129; TRP-136; TRP-139; TRP-146; TRP-149; TRP-156; TRP-159; TRP-166; TRP-169; TRP-176; TRP-179; TRP-186; TRP-189; TRP-196; TRP-199; TRP-206; TRP-209; TRP-216; TRP-219; TRP-226; TRP-229; TRP-236; TRP-239; TRP-246; TRP-249; TRP-256; TRP-259; TRP-266; TRP-269; TRP-276; TRP-279; TRP-286; TRP-289; TRP-296; TRP-299; TRP-306; TRP-309; TRP-316; TRP-319; TRP-326; TRP-329; TRP-336; TRP-339; TRP-346; TRP-349; TRP-356; TRP-359; TRP-366; TRP-369; TRP-376; TRP-379; TRP-386; TRP-389; TRP-396; TRP-399; TRP-406; TRP-409; TRP-416; TRP-419; TRP-426; TRP-429; TRP-436 AND TRP-439</scope>
    <scope>IDENTIFICATION BY MASS SPECTROMETRY</scope>
    <source>
        <tissue evidence="6">Foot</tissue>
    </source>
</reference>
<reference evidence="9" key="2">
    <citation type="journal article" date="2004" name="Biofouling">
        <title>A glycosylated byssal precursor protein from the green mussel Perna viridis with modified dopa side-chains.</title>
        <authorList>
            <person name="Ohkawa K."/>
            <person name="Nishida A."/>
            <person name="Yamamoto H."/>
            <person name="Waite J.H."/>
        </authorList>
    </citation>
    <scope>PROTEIN SEQUENCE OF REPEAT A</scope>
    <scope>PROTEIN SEQUENCE OF REPEAT B</scope>
    <scope>TISSUE SPECIFICITY</scope>
    <scope>HYDROXYLATION AT PRO-72; PRO-73; PRO-74; PRO-92; PRO-93; PRO-94; PRO-112; PRO-113; PRO-114; PRO-202; PRO-203; PRO-204; PRO-262; PRO-263; PRO-264; PRO-282; PRO-283; PRO-284; PRO-302; PRO-303; PRO-304; PRO-352; PRO-353; PRO-354; PRO-382; PRO-383; PRO-384; PRO-402; PRO-403 AND PRO-404</scope>
    <scope>GLYCOSYLATION</scope>
    <scope>IDENTIFICATION BY MASS SPECTROMETRY</scope>
    <source>
        <tissue evidence="5">Foot</tissue>
    </source>
</reference>